<dbReference type="EMBL" id="D32070">
    <property type="protein sequence ID" value="BAA06839.1"/>
    <property type="molecule type" value="mRNA"/>
</dbReference>
<dbReference type="EMBL" id="D32071">
    <property type="status" value="NOT_ANNOTATED_CDS"/>
    <property type="molecule type" value="Genomic_DNA"/>
</dbReference>
<dbReference type="EMBL" id="AACD01000043">
    <property type="protein sequence ID" value="EAA64635.1"/>
    <property type="molecule type" value="Genomic_DNA"/>
</dbReference>
<dbReference type="EMBL" id="BN001307">
    <property type="protein sequence ID" value="CBF87037.1"/>
    <property type="molecule type" value="Genomic_DNA"/>
</dbReference>
<dbReference type="PIR" id="S50131">
    <property type="entry name" value="S50131"/>
</dbReference>
<dbReference type="RefSeq" id="XP_660134.1">
    <property type="nucleotide sequence ID" value="XM_655042.1"/>
</dbReference>
<dbReference type="SMR" id="P40920"/>
<dbReference type="FunCoup" id="P40920">
    <property type="interactions" value="1019"/>
</dbReference>
<dbReference type="STRING" id="227321.P40920"/>
<dbReference type="EnsemblFungi" id="CBF87037">
    <property type="protein sequence ID" value="CBF87037"/>
    <property type="gene ID" value="ANIA_02530"/>
</dbReference>
<dbReference type="KEGG" id="ani:ANIA_02530"/>
<dbReference type="VEuPathDB" id="FungiDB:AN2530"/>
<dbReference type="eggNOG" id="KOG0710">
    <property type="taxonomic scope" value="Eukaryota"/>
</dbReference>
<dbReference type="HOGENOM" id="CLU_046737_1_1_1"/>
<dbReference type="InParanoid" id="P40920"/>
<dbReference type="OMA" id="MSLARQF"/>
<dbReference type="OrthoDB" id="1431247at2759"/>
<dbReference type="Proteomes" id="UP000000560">
    <property type="component" value="Chromosome VII"/>
</dbReference>
<dbReference type="GO" id="GO:0097308">
    <property type="term" value="P:cellular response to farnesol"/>
    <property type="evidence" value="ECO:0000270"/>
    <property type="project" value="AspGD"/>
</dbReference>
<dbReference type="GO" id="GO:0034605">
    <property type="term" value="P:cellular response to heat"/>
    <property type="evidence" value="ECO:0000270"/>
    <property type="project" value="AspGD"/>
</dbReference>
<dbReference type="CDD" id="cd06464">
    <property type="entry name" value="ACD_sHsps-like"/>
    <property type="match status" value="1"/>
</dbReference>
<dbReference type="Gene3D" id="2.60.40.790">
    <property type="match status" value="1"/>
</dbReference>
<dbReference type="InterPro" id="IPR002068">
    <property type="entry name" value="A-crystallin/Hsp20_dom"/>
</dbReference>
<dbReference type="InterPro" id="IPR008978">
    <property type="entry name" value="HSP20-like_chaperone"/>
</dbReference>
<dbReference type="InterPro" id="IPR031107">
    <property type="entry name" value="Small_HSP"/>
</dbReference>
<dbReference type="PANTHER" id="PTHR11527">
    <property type="entry name" value="HEAT-SHOCK PROTEIN 20 FAMILY MEMBER"/>
    <property type="match status" value="1"/>
</dbReference>
<dbReference type="Pfam" id="PF00011">
    <property type="entry name" value="HSP20"/>
    <property type="match status" value="1"/>
</dbReference>
<dbReference type="SUPFAM" id="SSF49764">
    <property type="entry name" value="HSP20-like chaperones"/>
    <property type="match status" value="1"/>
</dbReference>
<dbReference type="PROSITE" id="PS01031">
    <property type="entry name" value="SHSP"/>
    <property type="match status" value="1"/>
</dbReference>
<evidence type="ECO:0000255" key="1">
    <source>
        <dbReference type="PROSITE-ProRule" id="PRU00285"/>
    </source>
</evidence>
<evidence type="ECO:0000256" key="2">
    <source>
        <dbReference type="SAM" id="MobiDB-lite"/>
    </source>
</evidence>
<name>HSP30_EMENI</name>
<organism>
    <name type="scientific">Emericella nidulans (strain FGSC A4 / ATCC 38163 / CBS 112.46 / NRRL 194 / M139)</name>
    <name type="common">Aspergillus nidulans</name>
    <dbReference type="NCBI Taxonomy" id="227321"/>
    <lineage>
        <taxon>Eukaryota</taxon>
        <taxon>Fungi</taxon>
        <taxon>Dikarya</taxon>
        <taxon>Ascomycota</taxon>
        <taxon>Pezizomycotina</taxon>
        <taxon>Eurotiomycetes</taxon>
        <taxon>Eurotiomycetidae</taxon>
        <taxon>Eurotiales</taxon>
        <taxon>Aspergillaceae</taxon>
        <taxon>Aspergillus</taxon>
        <taxon>Aspergillus subgen. Nidulantes</taxon>
    </lineage>
</organism>
<gene>
    <name type="primary">hsp30</name>
    <name type="ORF">AN2530</name>
</gene>
<protein>
    <recommendedName>
        <fullName>30 kDa heat shock protein</fullName>
    </recommendedName>
</protein>
<comment type="similarity">
    <text evidence="1">Belongs to the small heat shock protein (HSP20) family.</text>
</comment>
<keyword id="KW-1185">Reference proteome</keyword>
<keyword id="KW-0346">Stress response</keyword>
<feature type="chain" id="PRO_0000126006" description="30 kDa heat shock protein">
    <location>
        <begin position="1"/>
        <end position="181"/>
    </location>
</feature>
<feature type="domain" description="sHSP" evidence="1">
    <location>
        <begin position="33"/>
        <end position="181"/>
    </location>
</feature>
<feature type="region of interest" description="Disordered" evidence="2">
    <location>
        <begin position="79"/>
        <end position="127"/>
    </location>
</feature>
<feature type="compositionally biased region" description="Basic and acidic residues" evidence="2">
    <location>
        <begin position="79"/>
        <end position="115"/>
    </location>
</feature>
<reference key="1">
    <citation type="journal article" date="1994" name="Biochim. Biophys. Acta">
        <title>Isolation and characterization of cDNA and genomic promoter region for a heat shock protein 30 from Aspergillus nidulans.</title>
        <authorList>
            <person name="Kusakabe T."/>
            <person name="Koga K."/>
            <person name="Sugimoto Y."/>
        </authorList>
    </citation>
    <scope>NUCLEOTIDE SEQUENCE [GENOMIC DNA / MRNA]</scope>
    <source>
        <strain>G034/ARGB2</strain>
    </source>
</reference>
<reference key="2">
    <citation type="journal article" date="2005" name="Nature">
        <title>Sequencing of Aspergillus nidulans and comparative analysis with A. fumigatus and A. oryzae.</title>
        <authorList>
            <person name="Galagan J.E."/>
            <person name="Calvo S.E."/>
            <person name="Cuomo C."/>
            <person name="Ma L.-J."/>
            <person name="Wortman J.R."/>
            <person name="Batzoglou S."/>
            <person name="Lee S.-I."/>
            <person name="Bastuerkmen M."/>
            <person name="Spevak C.C."/>
            <person name="Clutterbuck J."/>
            <person name="Kapitonov V."/>
            <person name="Jurka J."/>
            <person name="Scazzocchio C."/>
            <person name="Farman M.L."/>
            <person name="Butler J."/>
            <person name="Purcell S."/>
            <person name="Harris S."/>
            <person name="Braus G.H."/>
            <person name="Draht O."/>
            <person name="Busch S."/>
            <person name="D'Enfert C."/>
            <person name="Bouchier C."/>
            <person name="Goldman G.H."/>
            <person name="Bell-Pedersen D."/>
            <person name="Griffiths-Jones S."/>
            <person name="Doonan J.H."/>
            <person name="Yu J."/>
            <person name="Vienken K."/>
            <person name="Pain A."/>
            <person name="Freitag M."/>
            <person name="Selker E.U."/>
            <person name="Archer D.B."/>
            <person name="Penalva M.A."/>
            <person name="Oakley B.R."/>
            <person name="Momany M."/>
            <person name="Tanaka T."/>
            <person name="Kumagai T."/>
            <person name="Asai K."/>
            <person name="Machida M."/>
            <person name="Nierman W.C."/>
            <person name="Denning D.W."/>
            <person name="Caddick M.X."/>
            <person name="Hynes M."/>
            <person name="Paoletti M."/>
            <person name="Fischer R."/>
            <person name="Miller B.L."/>
            <person name="Dyer P.S."/>
            <person name="Sachs M.S."/>
            <person name="Osmani S.A."/>
            <person name="Birren B.W."/>
        </authorList>
    </citation>
    <scope>NUCLEOTIDE SEQUENCE [LARGE SCALE GENOMIC DNA]</scope>
    <source>
        <strain>FGSC A4 / ATCC 38163 / CBS 112.46 / NRRL 194 / M139</strain>
    </source>
</reference>
<reference key="3">
    <citation type="journal article" date="2009" name="Fungal Genet. Biol.">
        <title>The 2008 update of the Aspergillus nidulans genome annotation: a community effort.</title>
        <authorList>
            <person name="Wortman J.R."/>
            <person name="Gilsenan J.M."/>
            <person name="Joardar V."/>
            <person name="Deegan J."/>
            <person name="Clutterbuck J."/>
            <person name="Andersen M.R."/>
            <person name="Archer D."/>
            <person name="Bencina M."/>
            <person name="Braus G."/>
            <person name="Coutinho P."/>
            <person name="von Dohren H."/>
            <person name="Doonan J."/>
            <person name="Driessen A.J."/>
            <person name="Durek P."/>
            <person name="Espeso E."/>
            <person name="Fekete E."/>
            <person name="Flipphi M."/>
            <person name="Estrada C.G."/>
            <person name="Geysens S."/>
            <person name="Goldman G."/>
            <person name="de Groot P.W."/>
            <person name="Hansen K."/>
            <person name="Harris S.D."/>
            <person name="Heinekamp T."/>
            <person name="Helmstaedt K."/>
            <person name="Henrissat B."/>
            <person name="Hofmann G."/>
            <person name="Homan T."/>
            <person name="Horio T."/>
            <person name="Horiuchi H."/>
            <person name="James S."/>
            <person name="Jones M."/>
            <person name="Karaffa L."/>
            <person name="Karanyi Z."/>
            <person name="Kato M."/>
            <person name="Keller N."/>
            <person name="Kelly D.E."/>
            <person name="Kiel J.A."/>
            <person name="Kim J.M."/>
            <person name="van der Klei I.J."/>
            <person name="Klis F.M."/>
            <person name="Kovalchuk A."/>
            <person name="Krasevec N."/>
            <person name="Kubicek C.P."/>
            <person name="Liu B."/>
            <person name="Maccabe A."/>
            <person name="Meyer V."/>
            <person name="Mirabito P."/>
            <person name="Miskei M."/>
            <person name="Mos M."/>
            <person name="Mullins J."/>
            <person name="Nelson D.R."/>
            <person name="Nielsen J."/>
            <person name="Oakley B.R."/>
            <person name="Osmani S.A."/>
            <person name="Pakula T."/>
            <person name="Paszewski A."/>
            <person name="Paulsen I."/>
            <person name="Pilsyk S."/>
            <person name="Pocsi I."/>
            <person name="Punt P.J."/>
            <person name="Ram A.F."/>
            <person name="Ren Q."/>
            <person name="Robellet X."/>
            <person name="Robson G."/>
            <person name="Seiboth B."/>
            <person name="van Solingen P."/>
            <person name="Specht T."/>
            <person name="Sun J."/>
            <person name="Taheri-Talesh N."/>
            <person name="Takeshita N."/>
            <person name="Ussery D."/>
            <person name="vanKuyk P.A."/>
            <person name="Visser H."/>
            <person name="van de Vondervoort P.J."/>
            <person name="de Vries R.P."/>
            <person name="Walton J."/>
            <person name="Xiang X."/>
            <person name="Xiong Y."/>
            <person name="Zeng A.P."/>
            <person name="Brandt B.W."/>
            <person name="Cornell M.J."/>
            <person name="van den Hondel C.A."/>
            <person name="Visser J."/>
            <person name="Oliver S.G."/>
            <person name="Turner G."/>
        </authorList>
    </citation>
    <scope>GENOME REANNOTATION</scope>
    <source>
        <strain>FGSC A4 / ATCC 38163 / CBS 112.46 / NRRL 194 / M139</strain>
    </source>
</reference>
<accession>P40920</accession>
<accession>C8VPL2</accession>
<accession>Q5BAA0</accession>
<sequence length="181" mass="20284">MSLFRTIPTPGDFAPLFRLLDDYDNHRSARGHASVQSFAPRFDVRESNEAYHLDGELPGIPQSNIDIEFTDPQTLVIKGRSEREYHSSSDDNKNDQADTENQARGESSEVAKTGEKQVSTKKAANKSRYWVSERSVGEFQRTFTFPTRVNQDDVKASLKDGILSLVVPKAVPPTAKKITIQ</sequence>
<proteinExistence type="evidence at transcript level"/>